<organism>
    <name type="scientific">Drosophila melanogaster</name>
    <name type="common">Fruit fly</name>
    <dbReference type="NCBI Taxonomy" id="7227"/>
    <lineage>
        <taxon>Eukaryota</taxon>
        <taxon>Metazoa</taxon>
        <taxon>Ecdysozoa</taxon>
        <taxon>Arthropoda</taxon>
        <taxon>Hexapoda</taxon>
        <taxon>Insecta</taxon>
        <taxon>Pterygota</taxon>
        <taxon>Neoptera</taxon>
        <taxon>Endopterygota</taxon>
        <taxon>Diptera</taxon>
        <taxon>Brachycera</taxon>
        <taxon>Muscomorpha</taxon>
        <taxon>Ephydroidea</taxon>
        <taxon>Drosophilidae</taxon>
        <taxon>Drosophila</taxon>
        <taxon>Sophophora</taxon>
    </lineage>
</organism>
<proteinExistence type="evidence at transcript level"/>
<gene>
    <name evidence="4" type="primary">Aasdh</name>
    <name evidence="4" type="synonym">U26</name>
    <name evidence="4" type="ORF">CG13401</name>
</gene>
<dbReference type="EC" id="6.2.1.-" evidence="2"/>
<dbReference type="EMBL" id="AJ245708">
    <property type="protein sequence ID" value="CAB53510.1"/>
    <property type="status" value="ALT_SEQ"/>
    <property type="molecule type" value="mRNA"/>
</dbReference>
<dbReference type="EMBL" id="AE014134">
    <property type="protein sequence ID" value="AAF52679.3"/>
    <property type="molecule type" value="Genomic_DNA"/>
</dbReference>
<dbReference type="EMBL" id="BT025084">
    <property type="protein sequence ID" value="ABE73255.1"/>
    <property type="status" value="ALT_SEQ"/>
    <property type="molecule type" value="mRNA"/>
</dbReference>
<dbReference type="RefSeq" id="NP_609230.2">
    <property type="nucleotide sequence ID" value="NM_135386.5"/>
</dbReference>
<dbReference type="RefSeq" id="NP_995660.2">
    <property type="nucleotide sequence ID" value="NM_205938.2"/>
</dbReference>
<dbReference type="SMR" id="Q9VLL0"/>
<dbReference type="FunCoup" id="Q9VLL0">
    <property type="interactions" value="958"/>
</dbReference>
<dbReference type="STRING" id="7227.FBpp0088615"/>
<dbReference type="PaxDb" id="7227-FBpp0088615"/>
<dbReference type="DNASU" id="34175"/>
<dbReference type="EnsemblMetazoa" id="FBtr0089673">
    <property type="protein sequence ID" value="FBpp0088615"/>
    <property type="gene ID" value="FBgn0027780"/>
</dbReference>
<dbReference type="EnsemblMetazoa" id="FBtr0340243">
    <property type="protein sequence ID" value="FBpp0309217"/>
    <property type="gene ID" value="FBgn0027780"/>
</dbReference>
<dbReference type="GeneID" id="34175"/>
<dbReference type="KEGG" id="dme:Dmel_CG13401"/>
<dbReference type="UCSC" id="CG13401-RA">
    <property type="organism name" value="d. melanogaster"/>
</dbReference>
<dbReference type="AGR" id="FB:FBgn0027780"/>
<dbReference type="CTD" id="132949"/>
<dbReference type="FlyBase" id="FBgn0027780">
    <property type="gene designation" value="Aasdh"/>
</dbReference>
<dbReference type="VEuPathDB" id="VectorBase:FBgn0027780"/>
<dbReference type="eggNOG" id="KOG1178">
    <property type="taxonomic scope" value="Eukaryota"/>
</dbReference>
<dbReference type="eggNOG" id="KOG4649">
    <property type="taxonomic scope" value="Eukaryota"/>
</dbReference>
<dbReference type="GeneTree" id="ENSGT00440000033811"/>
<dbReference type="HOGENOM" id="CLU_010423_0_0_1"/>
<dbReference type="InParanoid" id="Q9VLL0"/>
<dbReference type="OMA" id="NGNVICC"/>
<dbReference type="OrthoDB" id="408177at2759"/>
<dbReference type="PhylomeDB" id="Q9VLL0"/>
<dbReference type="BioGRID-ORCS" id="34175">
    <property type="hits" value="0 hits in 1 CRISPR screen"/>
</dbReference>
<dbReference type="GenomeRNAi" id="34175"/>
<dbReference type="PRO" id="PR:Q9VLL0"/>
<dbReference type="Proteomes" id="UP000000803">
    <property type="component" value="Chromosome 2L"/>
</dbReference>
<dbReference type="Bgee" id="FBgn0027780">
    <property type="expression patterns" value="Expressed in outer photoreceptor cell (Drosophila) in insect head and 60 other cell types or tissues"/>
</dbReference>
<dbReference type="ExpressionAtlas" id="Q9VLL0">
    <property type="expression patterns" value="baseline and differential"/>
</dbReference>
<dbReference type="GO" id="GO:0005524">
    <property type="term" value="F:ATP binding"/>
    <property type="evidence" value="ECO:0007669"/>
    <property type="project" value="UniProtKB-KW"/>
</dbReference>
<dbReference type="GO" id="GO:0003833">
    <property type="term" value="F:beta-alanyl amine synthase activity"/>
    <property type="evidence" value="ECO:0000250"/>
    <property type="project" value="FlyBase"/>
</dbReference>
<dbReference type="GO" id="GO:0043041">
    <property type="term" value="P:amino acid activation for nonribosomal peptide biosynthetic process"/>
    <property type="evidence" value="ECO:0000318"/>
    <property type="project" value="GO_Central"/>
</dbReference>
<dbReference type="GO" id="GO:0006631">
    <property type="term" value="P:fatty acid metabolic process"/>
    <property type="evidence" value="ECO:0000250"/>
    <property type="project" value="UniProtKB"/>
</dbReference>
<dbReference type="CDD" id="cd17654">
    <property type="entry name" value="A_NRPS_acs4"/>
    <property type="match status" value="1"/>
</dbReference>
<dbReference type="FunFam" id="2.130.10.10:FF:001690">
    <property type="entry name" value="Uncharacterized protein, isoform A"/>
    <property type="match status" value="1"/>
</dbReference>
<dbReference type="Gene3D" id="2.40.10.480">
    <property type="match status" value="1"/>
</dbReference>
<dbReference type="Gene3D" id="3.30.300.30">
    <property type="match status" value="1"/>
</dbReference>
<dbReference type="Gene3D" id="3.40.50.12780">
    <property type="entry name" value="N-terminal domain of ligase-like"/>
    <property type="match status" value="1"/>
</dbReference>
<dbReference type="Gene3D" id="2.130.10.10">
    <property type="entry name" value="YVTN repeat-like/Quinoprotein amine dehydrogenase"/>
    <property type="match status" value="2"/>
</dbReference>
<dbReference type="InterPro" id="IPR048005">
    <property type="entry name" value="AASDH_AMP"/>
</dbReference>
<dbReference type="InterPro" id="IPR045851">
    <property type="entry name" value="AMP-bd_C_sf"/>
</dbReference>
<dbReference type="InterPro" id="IPR000873">
    <property type="entry name" value="AMP-dep_synth/lig_dom"/>
</dbReference>
<dbReference type="InterPro" id="IPR042099">
    <property type="entry name" value="ANL_N_sf"/>
</dbReference>
<dbReference type="InterPro" id="IPR052091">
    <property type="entry name" value="Beta-ala_Activ/Resist"/>
</dbReference>
<dbReference type="InterPro" id="IPR018391">
    <property type="entry name" value="PQQ_b-propeller_rpt"/>
</dbReference>
<dbReference type="InterPro" id="IPR002372">
    <property type="entry name" value="PQQ_rpt_dom"/>
</dbReference>
<dbReference type="InterPro" id="IPR011047">
    <property type="entry name" value="Quinoprotein_ADH-like_sf"/>
</dbReference>
<dbReference type="InterPro" id="IPR015943">
    <property type="entry name" value="WD40/YVTN_repeat-like_dom_sf"/>
</dbReference>
<dbReference type="PANTHER" id="PTHR44394">
    <property type="entry name" value="BETA-ALANINE-ACTIVATING ENZYME"/>
    <property type="match status" value="1"/>
</dbReference>
<dbReference type="PANTHER" id="PTHR44394:SF1">
    <property type="entry name" value="BETA-ALANINE-ACTIVATING ENZYME"/>
    <property type="match status" value="1"/>
</dbReference>
<dbReference type="Pfam" id="PF00501">
    <property type="entry name" value="AMP-binding"/>
    <property type="match status" value="1"/>
</dbReference>
<dbReference type="Pfam" id="PF13570">
    <property type="entry name" value="Beta-prop_ACSF4"/>
    <property type="match status" value="1"/>
</dbReference>
<dbReference type="SMART" id="SM00564">
    <property type="entry name" value="PQQ"/>
    <property type="match status" value="5"/>
</dbReference>
<dbReference type="SUPFAM" id="SSF56801">
    <property type="entry name" value="Acetyl-CoA synthetase-like"/>
    <property type="match status" value="1"/>
</dbReference>
<dbReference type="SUPFAM" id="SSF50998">
    <property type="entry name" value="Quinoprotein alcohol dehydrogenase-like"/>
    <property type="match status" value="1"/>
</dbReference>
<accession>Q9VLL0</accession>
<accession>Q1RKX6</accession>
<accession>Q9U973</accession>
<comment type="function">
    <text evidence="2">Covalently binds beta-alanine in an ATP-dependent manner to form a thioester bond with its phosphopantetheine group and transfers it to an, as yet, unknown acceptor. May be required for a post-translational protein modification or for post-transcriptional modification of an RNA.</text>
</comment>
<comment type="similarity">
    <text evidence="3">Belongs to the ATP-dependent AMP-binding enzyme family.</text>
</comment>
<comment type="sequence caution" evidence="3">
    <conflict type="erroneous termination">
        <sequence resource="EMBL-CDS" id="ABE73255"/>
    </conflict>
    <text>Truncated C-terminus.</text>
</comment>
<comment type="sequence caution" evidence="3">
    <conflict type="miscellaneous discrepancy">
        <sequence resource="EMBL-CDS" id="CAB53510"/>
    </conflict>
    <text>Insertion of a few bases causing frameshift at residue 295.</text>
</comment>
<sequence>MIPSDMDLIESTAEQPDKLYNINRIRAFKDVPFLIRRTESKDTIVSYADAADEIQVLMNFLRKNGVPDEAGIALRVTEHTPASSLMILAILNNKCHFFPTDKMMLSQDLYSQMSTAGVDYLVANKHLTVAPLYFTFLGSILVFKEDCRLYRVKLKSADETVQSKKPLPANMCYTISTTGTTGKPKLIHVPYECIAPNIVGLSQKLNVSMADIIYLGTPITFDPFVVEFFLALQNGATLLTSRHSMRDSPSKVLSALFPDNLATPGITVLQMTPSLFRQFGASSIKDRVLSGSSSLRVLLLGGEPFPSNVELVTWMHPSVLMQKHICNIYGITEISCWSLLHIVQSLQSPVPLGTPIEEDTVLRIESEDNETSQQGELFLGSVKRRCYIPEVDDQANASQDDSGICFRATGDLVTRQQDGTLFYSERSNDVVKRAGNRISLGLITRKIQKCLPSSELTTCLWLEDLQKLICCIRTLESKTRVQQRVQTFDILSKVSIAEQPDRFVYLQHFPCNVHGKLDKQQLLKMCIPLAQPAQQILKSYLHDRLECVEEPDDSASKKQRLDDAAPCGYDLSFRQAGGTSFHAITICREIGLQMCIDDEQRHLFEMLLDENIPLRTVLRFLDTAKLVANNIKRKNVETAVVVSACQSGLIIKRIEQPVLKLQIYWKVNFEKCIDSPVTEYEGRFICVGAHSKILRTLNPQTGSEYSVVKLPERIECKVTFLTEQLAMVGCYDGCLYGFNPQTGNIVFRVGIGGLIKSQPMLTADGRRIIVCSYADDYNVYCLSAERQEVLWCLRIGEKPIFASPLELPREQSLIVCTLDGSYSRVAITDGSVEWTQKFREPVFSTPVLLESVSNIFLSAEVAGRVHACHVGNGKILATFSTEGNIFSSLVVKTPPTFMGHSFAIFGCIDQHLYCLRCKTGPGGKSVELELHWKVDVGAPIYATPTLLTVQPNGLLVWCAATDGRVMLINFRNGEIQWSDKLPGQVFSSACFIEDLRRVFVGCRDNFLYCLGI</sequence>
<keyword id="KW-0067">ATP-binding</keyword>
<keyword id="KW-0276">Fatty acid metabolism</keyword>
<keyword id="KW-0436">Ligase</keyword>
<keyword id="KW-0443">Lipid metabolism</keyword>
<keyword id="KW-0547">Nucleotide-binding</keyword>
<keyword id="KW-1185">Reference proteome</keyword>
<name>ACSF4_DROME</name>
<evidence type="ECO:0000250" key="1"/>
<evidence type="ECO:0000250" key="2">
    <source>
        <dbReference type="UniProtKB" id="Q80WC9"/>
    </source>
</evidence>
<evidence type="ECO:0000305" key="3"/>
<evidence type="ECO:0000312" key="4">
    <source>
        <dbReference type="FlyBase" id="FBgn0027780"/>
    </source>
</evidence>
<protein>
    <recommendedName>
        <fullName evidence="2">Beta-alanine-activating enzyme</fullName>
        <ecNumber evidence="2">6.2.1.-</ecNumber>
    </recommendedName>
    <alternativeName>
        <fullName>Acyl-CoA synthetase family member 4</fullName>
    </alternativeName>
</protein>
<reference key="1">
    <citation type="submission" date="1999-08" db="EMBL/GenBank/DDBJ databases">
        <title>Deliniation of a modular structered enhancer that gives rise to olfactory organ specific expression of Drosophila1-acylglycerol-3-phosphate O-acyltransferase.</title>
        <authorList>
            <person name="Hovemann B.T."/>
            <person name="Heiermann R."/>
            <person name="Malz J."/>
            <person name="Richardt A."/>
            <person name="Stoertkuhl K.F."/>
            <person name="Sehlmeyer F."/>
        </authorList>
    </citation>
    <scope>NUCLEOTIDE SEQUENCE [MRNA]</scope>
    <source>
        <tissue>Antenna</tissue>
    </source>
</reference>
<reference key="2">
    <citation type="journal article" date="2000" name="Science">
        <title>The genome sequence of Drosophila melanogaster.</title>
        <authorList>
            <person name="Adams M.D."/>
            <person name="Celniker S.E."/>
            <person name="Holt R.A."/>
            <person name="Evans C.A."/>
            <person name="Gocayne J.D."/>
            <person name="Amanatides P.G."/>
            <person name="Scherer S.E."/>
            <person name="Li P.W."/>
            <person name="Hoskins R.A."/>
            <person name="Galle R.F."/>
            <person name="George R.A."/>
            <person name="Lewis S.E."/>
            <person name="Richards S."/>
            <person name="Ashburner M."/>
            <person name="Henderson S.N."/>
            <person name="Sutton G.G."/>
            <person name="Wortman J.R."/>
            <person name="Yandell M.D."/>
            <person name="Zhang Q."/>
            <person name="Chen L.X."/>
            <person name="Brandon R.C."/>
            <person name="Rogers Y.-H.C."/>
            <person name="Blazej R.G."/>
            <person name="Champe M."/>
            <person name="Pfeiffer B.D."/>
            <person name="Wan K.H."/>
            <person name="Doyle C."/>
            <person name="Baxter E.G."/>
            <person name="Helt G."/>
            <person name="Nelson C.R."/>
            <person name="Miklos G.L.G."/>
            <person name="Abril J.F."/>
            <person name="Agbayani A."/>
            <person name="An H.-J."/>
            <person name="Andrews-Pfannkoch C."/>
            <person name="Baldwin D."/>
            <person name="Ballew R.M."/>
            <person name="Basu A."/>
            <person name="Baxendale J."/>
            <person name="Bayraktaroglu L."/>
            <person name="Beasley E.M."/>
            <person name="Beeson K.Y."/>
            <person name="Benos P.V."/>
            <person name="Berman B.P."/>
            <person name="Bhandari D."/>
            <person name="Bolshakov S."/>
            <person name="Borkova D."/>
            <person name="Botchan M.R."/>
            <person name="Bouck J."/>
            <person name="Brokstein P."/>
            <person name="Brottier P."/>
            <person name="Burtis K.C."/>
            <person name="Busam D.A."/>
            <person name="Butler H."/>
            <person name="Cadieu E."/>
            <person name="Center A."/>
            <person name="Chandra I."/>
            <person name="Cherry J.M."/>
            <person name="Cawley S."/>
            <person name="Dahlke C."/>
            <person name="Davenport L.B."/>
            <person name="Davies P."/>
            <person name="de Pablos B."/>
            <person name="Delcher A."/>
            <person name="Deng Z."/>
            <person name="Mays A.D."/>
            <person name="Dew I."/>
            <person name="Dietz S.M."/>
            <person name="Dodson K."/>
            <person name="Doup L.E."/>
            <person name="Downes M."/>
            <person name="Dugan-Rocha S."/>
            <person name="Dunkov B.C."/>
            <person name="Dunn P."/>
            <person name="Durbin K.J."/>
            <person name="Evangelista C.C."/>
            <person name="Ferraz C."/>
            <person name="Ferriera S."/>
            <person name="Fleischmann W."/>
            <person name="Fosler C."/>
            <person name="Gabrielian A.E."/>
            <person name="Garg N.S."/>
            <person name="Gelbart W.M."/>
            <person name="Glasser K."/>
            <person name="Glodek A."/>
            <person name="Gong F."/>
            <person name="Gorrell J.H."/>
            <person name="Gu Z."/>
            <person name="Guan P."/>
            <person name="Harris M."/>
            <person name="Harris N.L."/>
            <person name="Harvey D.A."/>
            <person name="Heiman T.J."/>
            <person name="Hernandez J.R."/>
            <person name="Houck J."/>
            <person name="Hostin D."/>
            <person name="Houston K.A."/>
            <person name="Howland T.J."/>
            <person name="Wei M.-H."/>
            <person name="Ibegwam C."/>
            <person name="Jalali M."/>
            <person name="Kalush F."/>
            <person name="Karpen G.H."/>
            <person name="Ke Z."/>
            <person name="Kennison J.A."/>
            <person name="Ketchum K.A."/>
            <person name="Kimmel B.E."/>
            <person name="Kodira C.D."/>
            <person name="Kraft C.L."/>
            <person name="Kravitz S."/>
            <person name="Kulp D."/>
            <person name="Lai Z."/>
            <person name="Lasko P."/>
            <person name="Lei Y."/>
            <person name="Levitsky A.A."/>
            <person name="Li J.H."/>
            <person name="Li Z."/>
            <person name="Liang Y."/>
            <person name="Lin X."/>
            <person name="Liu X."/>
            <person name="Mattei B."/>
            <person name="McIntosh T.C."/>
            <person name="McLeod M.P."/>
            <person name="McPherson D."/>
            <person name="Merkulov G."/>
            <person name="Milshina N.V."/>
            <person name="Mobarry C."/>
            <person name="Morris J."/>
            <person name="Moshrefi A."/>
            <person name="Mount S.M."/>
            <person name="Moy M."/>
            <person name="Murphy B."/>
            <person name="Murphy L."/>
            <person name="Muzny D.M."/>
            <person name="Nelson D.L."/>
            <person name="Nelson D.R."/>
            <person name="Nelson K.A."/>
            <person name="Nixon K."/>
            <person name="Nusskern D.R."/>
            <person name="Pacleb J.M."/>
            <person name="Palazzolo M."/>
            <person name="Pittman G.S."/>
            <person name="Pan S."/>
            <person name="Pollard J."/>
            <person name="Puri V."/>
            <person name="Reese M.G."/>
            <person name="Reinert K."/>
            <person name="Remington K."/>
            <person name="Saunders R.D.C."/>
            <person name="Scheeler F."/>
            <person name="Shen H."/>
            <person name="Shue B.C."/>
            <person name="Siden-Kiamos I."/>
            <person name="Simpson M."/>
            <person name="Skupski M.P."/>
            <person name="Smith T.J."/>
            <person name="Spier E."/>
            <person name="Spradling A.C."/>
            <person name="Stapleton M."/>
            <person name="Strong R."/>
            <person name="Sun E."/>
            <person name="Svirskas R."/>
            <person name="Tector C."/>
            <person name="Turner R."/>
            <person name="Venter E."/>
            <person name="Wang A.H."/>
            <person name="Wang X."/>
            <person name="Wang Z.-Y."/>
            <person name="Wassarman D.A."/>
            <person name="Weinstock G.M."/>
            <person name="Weissenbach J."/>
            <person name="Williams S.M."/>
            <person name="Woodage T."/>
            <person name="Worley K.C."/>
            <person name="Wu D."/>
            <person name="Yang S."/>
            <person name="Yao Q.A."/>
            <person name="Ye J."/>
            <person name="Yeh R.-F."/>
            <person name="Zaveri J.S."/>
            <person name="Zhan M."/>
            <person name="Zhang G."/>
            <person name="Zhao Q."/>
            <person name="Zheng L."/>
            <person name="Zheng X.H."/>
            <person name="Zhong F.N."/>
            <person name="Zhong W."/>
            <person name="Zhou X."/>
            <person name="Zhu S.C."/>
            <person name="Zhu X."/>
            <person name="Smith H.O."/>
            <person name="Gibbs R.A."/>
            <person name="Myers E.W."/>
            <person name="Rubin G.M."/>
            <person name="Venter J.C."/>
        </authorList>
    </citation>
    <scope>NUCLEOTIDE SEQUENCE [LARGE SCALE GENOMIC DNA]</scope>
    <source>
        <strain>Berkeley</strain>
    </source>
</reference>
<reference key="3">
    <citation type="journal article" date="2002" name="Genome Biol.">
        <title>Annotation of the Drosophila melanogaster euchromatic genome: a systematic review.</title>
        <authorList>
            <person name="Misra S."/>
            <person name="Crosby M.A."/>
            <person name="Mungall C.J."/>
            <person name="Matthews B.B."/>
            <person name="Campbell K.S."/>
            <person name="Hradecky P."/>
            <person name="Huang Y."/>
            <person name="Kaminker J.S."/>
            <person name="Millburn G.H."/>
            <person name="Prochnik S.E."/>
            <person name="Smith C.D."/>
            <person name="Tupy J.L."/>
            <person name="Whitfield E.J."/>
            <person name="Bayraktaroglu L."/>
            <person name="Berman B.P."/>
            <person name="Bettencourt B.R."/>
            <person name="Celniker S.E."/>
            <person name="de Grey A.D.N.J."/>
            <person name="Drysdale R.A."/>
            <person name="Harris N.L."/>
            <person name="Richter J."/>
            <person name="Russo S."/>
            <person name="Schroeder A.J."/>
            <person name="Shu S.Q."/>
            <person name="Stapleton M."/>
            <person name="Yamada C."/>
            <person name="Ashburner M."/>
            <person name="Gelbart W.M."/>
            <person name="Rubin G.M."/>
            <person name="Lewis S.E."/>
        </authorList>
    </citation>
    <scope>GENOME REANNOTATION</scope>
    <source>
        <strain>Berkeley</strain>
    </source>
</reference>
<reference key="4">
    <citation type="submission" date="2006-04" db="EMBL/GenBank/DDBJ databases">
        <authorList>
            <person name="Stapleton M."/>
            <person name="Carlson J.W."/>
            <person name="Chavez C."/>
            <person name="Frise E."/>
            <person name="George R.A."/>
            <person name="Pacleb J.M."/>
            <person name="Park S."/>
            <person name="Wan K.H."/>
            <person name="Yu C."/>
            <person name="Celniker S.E."/>
        </authorList>
    </citation>
    <scope>NUCLEOTIDE SEQUENCE [LARGE SCALE MRNA]</scope>
    <source>
        <strain>Berkeley</strain>
    </source>
</reference>
<feature type="chain" id="PRO_0000315806" description="Beta-alanine-activating enzyme">
    <location>
        <begin position="1"/>
        <end position="1012"/>
    </location>
</feature>
<feature type="binding site" evidence="1">
    <location>
        <begin position="177"/>
        <end position="185"/>
    </location>
    <ligand>
        <name>ATP</name>
        <dbReference type="ChEBI" id="CHEBI:30616"/>
    </ligand>
</feature>
<feature type="binding site" evidence="1">
    <location>
        <position position="411"/>
    </location>
    <ligand>
        <name>ATP</name>
        <dbReference type="ChEBI" id="CHEBI:30616"/>
    </ligand>
</feature>
<feature type="binding site" evidence="1">
    <location>
        <position position="426"/>
    </location>
    <ligand>
        <name>ATP</name>
        <dbReference type="ChEBI" id="CHEBI:30616"/>
    </ligand>
</feature>
<feature type="binding site" evidence="1">
    <location>
        <position position="516"/>
    </location>
    <ligand>
        <name>ATP</name>
        <dbReference type="ChEBI" id="CHEBI:30616"/>
    </ligand>
</feature>
<feature type="sequence conflict" description="In Ref. 4; ABE73255." evidence="3" ref="4">
    <original>K</original>
    <variation>M</variation>
    <location>
        <position position="63"/>
    </location>
</feature>
<feature type="sequence conflict" description="In Ref. 4; ABE73255." evidence="3" ref="4">
    <original>A</original>
    <variation>V</variation>
    <location>
        <position position="123"/>
    </location>
</feature>
<feature type="sequence conflict" description="In Ref. 4; ABE73255." evidence="3" ref="4">
    <original>A</original>
    <variation>G</variation>
    <location>
        <position position="169"/>
    </location>
</feature>
<feature type="sequence conflict" description="In Ref. 4; ABE73255." evidence="3" ref="4">
    <original>V</original>
    <variation>M</variation>
    <location>
        <position position="199"/>
    </location>
</feature>
<feature type="sequence conflict" description="In Ref. 4; ABE73255." evidence="3" ref="4">
    <original>T</original>
    <variation>S</variation>
    <location>
        <position position="267"/>
    </location>
</feature>
<feature type="sequence conflict" description="In Ref. 4; ABE73255." evidence="3" ref="4">
    <original>D</original>
    <variation>E</variation>
    <location>
        <position position="286"/>
    </location>
</feature>
<feature type="sequence conflict" description="In Ref. 4; ABE73255." evidence="3" ref="4">
    <original>V</original>
    <variation>D</variation>
    <location>
        <position position="309"/>
    </location>
</feature>
<feature type="sequence conflict" description="In Ref. 4; ABE73255." evidence="3" ref="4">
    <original>Q</original>
    <variation>H</variation>
    <location>
        <position position="417"/>
    </location>
</feature>
<feature type="sequence conflict" description="In Ref. 4; ABE73255." evidence="3" ref="4">
    <original>S</original>
    <variation>N</variation>
    <location>
        <position position="424"/>
    </location>
</feature>
<feature type="sequence conflict" description="In Ref. 4; ABE73255." evidence="3" ref="4">
    <original>T</original>
    <variation>P</variation>
    <location>
        <position position="638"/>
    </location>
</feature>
<feature type="sequence conflict" description="In Ref. 4; ABE73255." evidence="3" ref="4">
    <original>V</original>
    <variation>A</variation>
    <location>
        <position position="642"/>
    </location>
</feature>
<feature type="sequence conflict" description="In Ref. 4; ABE73255." evidence="3" ref="4">
    <original>N</original>
    <variation>D</variation>
    <location>
        <position position="744"/>
    </location>
</feature>
<feature type="sequence conflict" description="In Ref. 4; ABE73255." evidence="3" ref="4">
    <original>L</original>
    <variation>V</variation>
    <location>
        <position position="912"/>
    </location>
</feature>
<feature type="sequence conflict" description="In Ref. 4; ABE73255." evidence="3" ref="4">
    <original>F</original>
    <variation>L</variation>
    <location>
        <position position="970"/>
    </location>
</feature>